<keyword id="KW-0687">Ribonucleoprotein</keyword>
<keyword id="KW-0689">Ribosomal protein</keyword>
<proteinExistence type="inferred from homology"/>
<name>RL19_RHOPS</name>
<protein>
    <recommendedName>
        <fullName evidence="1">Large ribosomal subunit protein bL19</fullName>
    </recommendedName>
    <alternativeName>
        <fullName evidence="2">50S ribosomal protein L19</fullName>
    </alternativeName>
</protein>
<gene>
    <name evidence="1" type="primary">rplS</name>
    <name type="ordered locus">RPD_0506</name>
</gene>
<dbReference type="EMBL" id="CP000283">
    <property type="protein sequence ID" value="ABE37744.1"/>
    <property type="molecule type" value="Genomic_DNA"/>
</dbReference>
<dbReference type="SMR" id="Q13DU5"/>
<dbReference type="STRING" id="316057.RPD_0506"/>
<dbReference type="KEGG" id="rpd:RPD_0506"/>
<dbReference type="eggNOG" id="COG0335">
    <property type="taxonomic scope" value="Bacteria"/>
</dbReference>
<dbReference type="HOGENOM" id="CLU_103507_2_1_5"/>
<dbReference type="BioCyc" id="RPAL316057:RPD_RS02595-MONOMER"/>
<dbReference type="Proteomes" id="UP000001818">
    <property type="component" value="Chromosome"/>
</dbReference>
<dbReference type="GO" id="GO:0022625">
    <property type="term" value="C:cytosolic large ribosomal subunit"/>
    <property type="evidence" value="ECO:0007669"/>
    <property type="project" value="TreeGrafter"/>
</dbReference>
<dbReference type="GO" id="GO:0003735">
    <property type="term" value="F:structural constituent of ribosome"/>
    <property type="evidence" value="ECO:0007669"/>
    <property type="project" value="InterPro"/>
</dbReference>
<dbReference type="GO" id="GO:0006412">
    <property type="term" value="P:translation"/>
    <property type="evidence" value="ECO:0007669"/>
    <property type="project" value="UniProtKB-UniRule"/>
</dbReference>
<dbReference type="FunFam" id="2.30.30.790:FF:000001">
    <property type="entry name" value="50S ribosomal protein L19"/>
    <property type="match status" value="1"/>
</dbReference>
<dbReference type="Gene3D" id="2.30.30.790">
    <property type="match status" value="1"/>
</dbReference>
<dbReference type="HAMAP" id="MF_00402">
    <property type="entry name" value="Ribosomal_bL19"/>
    <property type="match status" value="1"/>
</dbReference>
<dbReference type="InterPro" id="IPR001857">
    <property type="entry name" value="Ribosomal_bL19"/>
</dbReference>
<dbReference type="InterPro" id="IPR018257">
    <property type="entry name" value="Ribosomal_bL19_CS"/>
</dbReference>
<dbReference type="InterPro" id="IPR038657">
    <property type="entry name" value="Ribosomal_bL19_sf"/>
</dbReference>
<dbReference type="InterPro" id="IPR008991">
    <property type="entry name" value="Translation_prot_SH3-like_sf"/>
</dbReference>
<dbReference type="NCBIfam" id="TIGR01024">
    <property type="entry name" value="rplS_bact"/>
    <property type="match status" value="1"/>
</dbReference>
<dbReference type="PANTHER" id="PTHR15680:SF9">
    <property type="entry name" value="LARGE RIBOSOMAL SUBUNIT PROTEIN BL19M"/>
    <property type="match status" value="1"/>
</dbReference>
<dbReference type="PANTHER" id="PTHR15680">
    <property type="entry name" value="RIBOSOMAL PROTEIN L19"/>
    <property type="match status" value="1"/>
</dbReference>
<dbReference type="Pfam" id="PF01245">
    <property type="entry name" value="Ribosomal_L19"/>
    <property type="match status" value="1"/>
</dbReference>
<dbReference type="PIRSF" id="PIRSF002191">
    <property type="entry name" value="Ribosomal_L19"/>
    <property type="match status" value="1"/>
</dbReference>
<dbReference type="PRINTS" id="PR00061">
    <property type="entry name" value="RIBOSOMALL19"/>
</dbReference>
<dbReference type="SUPFAM" id="SSF50104">
    <property type="entry name" value="Translation proteins SH3-like domain"/>
    <property type="match status" value="1"/>
</dbReference>
<dbReference type="PROSITE" id="PS01015">
    <property type="entry name" value="RIBOSOMAL_L19"/>
    <property type="match status" value="1"/>
</dbReference>
<reference key="1">
    <citation type="submission" date="2006-03" db="EMBL/GenBank/DDBJ databases">
        <title>Complete sequence of Rhodopseudomonas palustris BisB5.</title>
        <authorList>
            <consortium name="US DOE Joint Genome Institute"/>
            <person name="Copeland A."/>
            <person name="Lucas S."/>
            <person name="Lapidus A."/>
            <person name="Barry K."/>
            <person name="Detter J.C."/>
            <person name="Glavina del Rio T."/>
            <person name="Hammon N."/>
            <person name="Israni S."/>
            <person name="Dalin E."/>
            <person name="Tice H."/>
            <person name="Pitluck S."/>
            <person name="Chain P."/>
            <person name="Malfatti S."/>
            <person name="Shin M."/>
            <person name="Vergez L."/>
            <person name="Schmutz J."/>
            <person name="Larimer F."/>
            <person name="Land M."/>
            <person name="Hauser L."/>
            <person name="Pelletier D.A."/>
            <person name="Kyrpides N."/>
            <person name="Lykidis A."/>
            <person name="Oda Y."/>
            <person name="Harwood C.S."/>
            <person name="Richardson P."/>
        </authorList>
    </citation>
    <scope>NUCLEOTIDE SEQUENCE [LARGE SCALE GENOMIC DNA]</scope>
    <source>
        <strain>BisB5</strain>
    </source>
</reference>
<evidence type="ECO:0000255" key="1">
    <source>
        <dbReference type="HAMAP-Rule" id="MF_00402"/>
    </source>
</evidence>
<evidence type="ECO:0000305" key="2"/>
<feature type="chain" id="PRO_1000049728" description="Large ribosomal subunit protein bL19">
    <location>
        <begin position="1"/>
        <end position="131"/>
    </location>
</feature>
<organism>
    <name type="scientific">Rhodopseudomonas palustris (strain BisB5)</name>
    <dbReference type="NCBI Taxonomy" id="316057"/>
    <lineage>
        <taxon>Bacteria</taxon>
        <taxon>Pseudomonadati</taxon>
        <taxon>Pseudomonadota</taxon>
        <taxon>Alphaproteobacteria</taxon>
        <taxon>Hyphomicrobiales</taxon>
        <taxon>Nitrobacteraceae</taxon>
        <taxon>Rhodopseudomonas</taxon>
    </lineage>
</organism>
<sequence>MNLIQTLEKEQFDKLSAGKTIPEFGPGDTVIVNVKVVEGERSRVQAYEGVCIGRSGGGINESFTVRKISYGEGVERVFPLLSPMIDSIKVVRRGKVRRAKLYYLRNLRGKSARIVEKKQDRPAKVAAGAAE</sequence>
<comment type="function">
    <text evidence="1">This protein is located at the 30S-50S ribosomal subunit interface and may play a role in the structure and function of the aminoacyl-tRNA binding site.</text>
</comment>
<comment type="similarity">
    <text evidence="1">Belongs to the bacterial ribosomal protein bL19 family.</text>
</comment>
<accession>Q13DU5</accession>